<keyword id="KW-0143">Chaperone</keyword>
<keyword id="KW-0963">Cytoplasm</keyword>
<keyword id="KW-0694">RNA-binding</keyword>
<comment type="function">
    <text evidence="1">RNA chaperone with significant RNA binding, RNA strand exchange and RNA duplexing activities. May regulate ProP activity through an RNA-based, post-transcriptional mechanism.</text>
</comment>
<comment type="subcellular location">
    <subcellularLocation>
        <location evidence="1">Cytoplasm</location>
    </subcellularLocation>
</comment>
<comment type="similarity">
    <text evidence="1">Belongs to the ProQ family.</text>
</comment>
<accession>B4TKH6</accession>
<feature type="chain" id="PRO_1000133305" description="RNA chaperone ProQ">
    <location>
        <begin position="1"/>
        <end position="228"/>
    </location>
</feature>
<feature type="region of interest" description="Disordered" evidence="2">
    <location>
        <begin position="107"/>
        <end position="178"/>
    </location>
</feature>
<feature type="compositionally biased region" description="Basic and acidic residues" evidence="2">
    <location>
        <begin position="117"/>
        <end position="136"/>
    </location>
</feature>
<feature type="compositionally biased region" description="Basic and acidic residues" evidence="2">
    <location>
        <begin position="146"/>
        <end position="175"/>
    </location>
</feature>
<reference key="1">
    <citation type="journal article" date="2011" name="J. Bacteriol.">
        <title>Comparative genomics of 28 Salmonella enterica isolates: evidence for CRISPR-mediated adaptive sublineage evolution.</title>
        <authorList>
            <person name="Fricke W.F."/>
            <person name="Mammel M.K."/>
            <person name="McDermott P.F."/>
            <person name="Tartera C."/>
            <person name="White D.G."/>
            <person name="Leclerc J.E."/>
            <person name="Ravel J."/>
            <person name="Cebula T.A."/>
        </authorList>
    </citation>
    <scope>NUCLEOTIDE SEQUENCE [LARGE SCALE GENOMIC DNA]</scope>
    <source>
        <strain>SL476</strain>
    </source>
</reference>
<protein>
    <recommendedName>
        <fullName evidence="1">RNA chaperone ProQ</fullName>
    </recommendedName>
</protein>
<dbReference type="EMBL" id="CP001120">
    <property type="protein sequence ID" value="ACF67970.1"/>
    <property type="molecule type" value="Genomic_DNA"/>
</dbReference>
<dbReference type="RefSeq" id="WP_000431401.1">
    <property type="nucleotide sequence ID" value="NC_011083.1"/>
</dbReference>
<dbReference type="SMR" id="B4TKH6"/>
<dbReference type="KEGG" id="seh:SeHA_C2047"/>
<dbReference type="HOGENOM" id="CLU_113254_0_0_6"/>
<dbReference type="Proteomes" id="UP000001866">
    <property type="component" value="Chromosome"/>
</dbReference>
<dbReference type="GO" id="GO:0005829">
    <property type="term" value="C:cytosol"/>
    <property type="evidence" value="ECO:0007669"/>
    <property type="project" value="TreeGrafter"/>
</dbReference>
<dbReference type="GO" id="GO:0033592">
    <property type="term" value="F:RNA strand annealing activity"/>
    <property type="evidence" value="ECO:0007669"/>
    <property type="project" value="UniProtKB-UniRule"/>
</dbReference>
<dbReference type="GO" id="GO:0034057">
    <property type="term" value="F:RNA strand-exchange activity"/>
    <property type="evidence" value="ECO:0007669"/>
    <property type="project" value="UniProtKB-UniRule"/>
</dbReference>
<dbReference type="GO" id="GO:0010608">
    <property type="term" value="P:post-transcriptional regulation of gene expression"/>
    <property type="evidence" value="ECO:0007669"/>
    <property type="project" value="InterPro"/>
</dbReference>
<dbReference type="FunFam" id="1.10.1710.10:FF:000001">
    <property type="entry name" value="RNA chaperone ProQ"/>
    <property type="match status" value="1"/>
</dbReference>
<dbReference type="Gene3D" id="1.10.1710.10">
    <property type="entry name" value="ProQ/FinO domain"/>
    <property type="match status" value="1"/>
</dbReference>
<dbReference type="HAMAP" id="MF_00749">
    <property type="entry name" value="ProQ"/>
    <property type="match status" value="1"/>
</dbReference>
<dbReference type="InterPro" id="IPR023529">
    <property type="entry name" value="ProQ"/>
</dbReference>
<dbReference type="InterPro" id="IPR016103">
    <property type="entry name" value="ProQ/FinO"/>
</dbReference>
<dbReference type="InterPro" id="IPR036442">
    <property type="entry name" value="ProQ/FinO_sf"/>
</dbReference>
<dbReference type="InterPro" id="IPR035236">
    <property type="entry name" value="ProQ_C"/>
</dbReference>
<dbReference type="NCBIfam" id="NF003434">
    <property type="entry name" value="PRK04950.1"/>
    <property type="match status" value="1"/>
</dbReference>
<dbReference type="PANTHER" id="PTHR38106">
    <property type="entry name" value="RNA CHAPERONE PROQ"/>
    <property type="match status" value="1"/>
</dbReference>
<dbReference type="PANTHER" id="PTHR38106:SF1">
    <property type="entry name" value="RNA CHAPERONE PROQ"/>
    <property type="match status" value="1"/>
</dbReference>
<dbReference type="Pfam" id="PF04352">
    <property type="entry name" value="ProQ"/>
    <property type="match status" value="1"/>
</dbReference>
<dbReference type="Pfam" id="PF17516">
    <property type="entry name" value="ProQ_C"/>
    <property type="match status" value="1"/>
</dbReference>
<dbReference type="SMART" id="SM00945">
    <property type="entry name" value="ProQ"/>
    <property type="match status" value="1"/>
</dbReference>
<dbReference type="SUPFAM" id="SSF48657">
    <property type="entry name" value="FinO-like"/>
    <property type="match status" value="1"/>
</dbReference>
<sequence>MENQPKLNSSKEVIAFLAERFPHCFSAEGEARPLKIGIFQDLVERVGGEMNLSKTQLRSALRLYTSSWRYLYGVKPGATRVDLDGNPCGELEEQHVEHARKQLEEAKARVQAQRAEQQAKKREAAAAAGEKEDAPRRERKPRPVARRKEGAERKPRADKPTTKAPRAPREEKHTPVSDISVLTVGQSLKVKAGNNAMDATVLEITKDGVRVQLNSGMSLIVRAEHLVF</sequence>
<organism>
    <name type="scientific">Salmonella heidelberg (strain SL476)</name>
    <dbReference type="NCBI Taxonomy" id="454169"/>
    <lineage>
        <taxon>Bacteria</taxon>
        <taxon>Pseudomonadati</taxon>
        <taxon>Pseudomonadota</taxon>
        <taxon>Gammaproteobacteria</taxon>
        <taxon>Enterobacterales</taxon>
        <taxon>Enterobacteriaceae</taxon>
        <taxon>Salmonella</taxon>
    </lineage>
</organism>
<gene>
    <name evidence="1" type="primary">proQ</name>
    <name type="ordered locus">SeHA_C2047</name>
</gene>
<evidence type="ECO:0000255" key="1">
    <source>
        <dbReference type="HAMAP-Rule" id="MF_00749"/>
    </source>
</evidence>
<evidence type="ECO:0000256" key="2">
    <source>
        <dbReference type="SAM" id="MobiDB-lite"/>
    </source>
</evidence>
<name>PROQ_SALHS</name>
<proteinExistence type="inferred from homology"/>